<dbReference type="EC" id="2.1.1.137" evidence="1"/>
<dbReference type="EMBL" id="BX572604">
    <property type="protein sequence ID" value="CAE29003.1"/>
    <property type="molecule type" value="Genomic_DNA"/>
</dbReference>
<dbReference type="RefSeq" id="WP_011159102.1">
    <property type="nucleotide sequence ID" value="NZ_CP116810.1"/>
</dbReference>
<dbReference type="SMR" id="Q6N3Y0"/>
<dbReference type="STRING" id="258594.RPA3562"/>
<dbReference type="GeneID" id="66894664"/>
<dbReference type="eggNOG" id="COG2226">
    <property type="taxonomic scope" value="Bacteria"/>
</dbReference>
<dbReference type="HOGENOM" id="CLU_052868_1_2_5"/>
<dbReference type="PhylomeDB" id="Q6N3Y0"/>
<dbReference type="BioCyc" id="MetaCyc:MONOMER-21674"/>
<dbReference type="GO" id="GO:0030791">
    <property type="term" value="F:arsenite methyltransferase activity"/>
    <property type="evidence" value="ECO:0007669"/>
    <property type="project" value="UniProtKB-EC"/>
</dbReference>
<dbReference type="GO" id="GO:0032259">
    <property type="term" value="P:methylation"/>
    <property type="evidence" value="ECO:0007669"/>
    <property type="project" value="UniProtKB-KW"/>
</dbReference>
<dbReference type="GO" id="GO:0046685">
    <property type="term" value="P:response to arsenic-containing substance"/>
    <property type="evidence" value="ECO:0007669"/>
    <property type="project" value="UniProtKB-KW"/>
</dbReference>
<dbReference type="CDD" id="cd02440">
    <property type="entry name" value="AdoMet_MTases"/>
    <property type="match status" value="1"/>
</dbReference>
<dbReference type="Gene3D" id="3.40.50.150">
    <property type="entry name" value="Vaccinia Virus protein VP39"/>
    <property type="match status" value="1"/>
</dbReference>
<dbReference type="InterPro" id="IPR026669">
    <property type="entry name" value="Arsenite_MeTrfase-like"/>
</dbReference>
<dbReference type="InterPro" id="IPR025714">
    <property type="entry name" value="Methyltranfer_dom"/>
</dbReference>
<dbReference type="InterPro" id="IPR029063">
    <property type="entry name" value="SAM-dependent_MTases_sf"/>
</dbReference>
<dbReference type="NCBIfam" id="NF008823">
    <property type="entry name" value="PRK11873.1"/>
    <property type="match status" value="1"/>
</dbReference>
<dbReference type="PANTHER" id="PTHR43675">
    <property type="entry name" value="ARSENITE METHYLTRANSFERASE"/>
    <property type="match status" value="1"/>
</dbReference>
<dbReference type="PANTHER" id="PTHR43675:SF8">
    <property type="entry name" value="ARSENITE METHYLTRANSFERASE"/>
    <property type="match status" value="1"/>
</dbReference>
<dbReference type="Pfam" id="PF13847">
    <property type="entry name" value="Methyltransf_31"/>
    <property type="match status" value="1"/>
</dbReference>
<dbReference type="SUPFAM" id="SSF53335">
    <property type="entry name" value="S-adenosyl-L-methionine-dependent methyltransferases"/>
    <property type="match status" value="1"/>
</dbReference>
<protein>
    <recommendedName>
        <fullName evidence="3">Arsenite methyltransferase</fullName>
        <ecNumber evidence="1">2.1.1.137</ecNumber>
    </recommendedName>
    <alternativeName>
        <fullName evidence="2">As(III) AdoMet methyltransferase</fullName>
    </alternativeName>
</protein>
<sequence>MPTDMQDVKDIVREKYASAALKVATGGASCCGSSALPGASPITSNLYDAAQEQGLPAEAMLASLGCGNPTALAQLSPGETVLDLGSGGGIDVLLSARRVGPTGKAYGLDMTDEMLALARDNQRKAGLDNVEFLKGEIEAIPLPDHSVDVIISNCVINLSGDKDRVLREAFRVLKPGGRFAVSDVVTRGEIPEALRRDVLLWVGCLAGALDEADYVAKLAAAGFAQISIEPTRVYDIEDAREFLTGKGIDVDALAPQMQDKFFSGFVRATKPGADGEVPARCCG</sequence>
<comment type="function">
    <text evidence="1">Catalyzes the transfer of a methyl group from AdoMet to arsenite, producing methylated arsenicals. Involved in the conversion of As(III) to a number of di- and trimethylated species, with trimethylarsine as the end product. Reduces the arsenic toxicity in the cell and may contribute to the global arsenic cycling.</text>
</comment>
<comment type="catalytic activity">
    <reaction evidence="1">
        <text>arsenic triglutathione + [thioredoxin]-dithiol + S-adenosyl-L-methionine + 2 H2O = methylarsonous acid + [thioredoxin]-disulfide + 3 glutathione + S-adenosyl-L-homocysteine + H(+)</text>
        <dbReference type="Rhea" id="RHEA:69460"/>
        <dbReference type="Rhea" id="RHEA-COMP:10698"/>
        <dbReference type="Rhea" id="RHEA-COMP:10700"/>
        <dbReference type="ChEBI" id="CHEBI:15377"/>
        <dbReference type="ChEBI" id="CHEBI:15378"/>
        <dbReference type="ChEBI" id="CHEBI:17826"/>
        <dbReference type="ChEBI" id="CHEBI:29950"/>
        <dbReference type="ChEBI" id="CHEBI:50058"/>
        <dbReference type="ChEBI" id="CHEBI:57856"/>
        <dbReference type="ChEBI" id="CHEBI:57925"/>
        <dbReference type="ChEBI" id="CHEBI:59789"/>
        <dbReference type="ChEBI" id="CHEBI:183640"/>
        <dbReference type="EC" id="2.1.1.137"/>
    </reaction>
</comment>
<comment type="catalytic activity">
    <reaction evidence="1">
        <text>arsenic triglutathione + 2 [thioredoxin]-dithiol + 2 S-adenosyl-L-methionine + H2O = dimethylarsinous acid + 2 [thioredoxin]-disulfide + 3 glutathione + 2 S-adenosyl-L-homocysteine + 2 H(+)</text>
        <dbReference type="Rhea" id="RHEA:69464"/>
        <dbReference type="Rhea" id="RHEA-COMP:10698"/>
        <dbReference type="Rhea" id="RHEA-COMP:10700"/>
        <dbReference type="ChEBI" id="CHEBI:15377"/>
        <dbReference type="ChEBI" id="CHEBI:15378"/>
        <dbReference type="ChEBI" id="CHEBI:23808"/>
        <dbReference type="ChEBI" id="CHEBI:29950"/>
        <dbReference type="ChEBI" id="CHEBI:50058"/>
        <dbReference type="ChEBI" id="CHEBI:57856"/>
        <dbReference type="ChEBI" id="CHEBI:57925"/>
        <dbReference type="ChEBI" id="CHEBI:59789"/>
        <dbReference type="ChEBI" id="CHEBI:183640"/>
        <dbReference type="EC" id="2.1.1.137"/>
    </reaction>
</comment>
<comment type="catalytic activity">
    <reaction evidence="1">
        <text>arsenic triglutathione + 3 [thioredoxin]-dithiol + 3 S-adenosyl-L-methionine = trimethylarsine + 3 [thioredoxin]-disulfide + 3 glutathione + 3 S-adenosyl-L-homocysteine + 3 H(+)</text>
        <dbReference type="Rhea" id="RHEA:69432"/>
        <dbReference type="Rhea" id="RHEA-COMP:10698"/>
        <dbReference type="Rhea" id="RHEA-COMP:10700"/>
        <dbReference type="ChEBI" id="CHEBI:15378"/>
        <dbReference type="ChEBI" id="CHEBI:27130"/>
        <dbReference type="ChEBI" id="CHEBI:29950"/>
        <dbReference type="ChEBI" id="CHEBI:50058"/>
        <dbReference type="ChEBI" id="CHEBI:57856"/>
        <dbReference type="ChEBI" id="CHEBI:57925"/>
        <dbReference type="ChEBI" id="CHEBI:59789"/>
        <dbReference type="ChEBI" id="CHEBI:183640"/>
        <dbReference type="EC" id="2.1.1.137"/>
    </reaction>
</comment>
<comment type="similarity">
    <text evidence="3">Belongs to the methyltransferase superfamily. Arsenite methyltransferase family.</text>
</comment>
<feature type="chain" id="PRO_0000439595" description="Arsenite methyltransferase">
    <location>
        <begin position="1"/>
        <end position="283"/>
    </location>
</feature>
<reference key="1">
    <citation type="journal article" date="2004" name="Nat. Biotechnol.">
        <title>Complete genome sequence of the metabolically versatile photosynthetic bacterium Rhodopseudomonas palustris.</title>
        <authorList>
            <person name="Larimer F.W."/>
            <person name="Chain P."/>
            <person name="Hauser L."/>
            <person name="Lamerdin J.E."/>
            <person name="Malfatti S."/>
            <person name="Do L."/>
            <person name="Land M.L."/>
            <person name="Pelletier D.A."/>
            <person name="Beatty J.T."/>
            <person name="Lang A.S."/>
            <person name="Tabita F.R."/>
            <person name="Gibson J.L."/>
            <person name="Hanson T.E."/>
            <person name="Bobst C."/>
            <person name="Torres y Torres J.L."/>
            <person name="Peres C."/>
            <person name="Harrison F.H."/>
            <person name="Gibson J."/>
            <person name="Harwood C.S."/>
        </authorList>
    </citation>
    <scope>NUCLEOTIDE SEQUENCE [LARGE SCALE GENOMIC DNA]</scope>
    <source>
        <strain>ATCC BAA-98 / CGA009</strain>
    </source>
</reference>
<reference key="2">
    <citation type="journal article" date="2006" name="Proc. Natl. Acad. Sci. U.S.A.">
        <title>Arsenic detoxification and evolution of trimethylarsine gas by a microbial arsenite S-adenosylmethionine methyltransferase.</title>
        <authorList>
            <person name="Qin J."/>
            <person name="Rosen B.P."/>
            <person name="Zhang Y."/>
            <person name="Wang G."/>
            <person name="Franke S."/>
            <person name="Rensing C."/>
        </authorList>
    </citation>
    <scope>FUNCTION</scope>
    <scope>CATALYTIC ACTIVITY</scope>
    <source>
        <strain>ATCC BAA-98 / CGA009</strain>
    </source>
</reference>
<name>ARSM_RHOPA</name>
<proteinExistence type="evidence at protein level"/>
<gene>
    <name evidence="3" type="primary">arsM</name>
    <name evidence="4" type="ordered locus">RPA3562</name>
</gene>
<keyword id="KW-0059">Arsenical resistance</keyword>
<keyword id="KW-0489">Methyltransferase</keyword>
<keyword id="KW-0949">S-adenosyl-L-methionine</keyword>
<keyword id="KW-0808">Transferase</keyword>
<accession>Q6N3Y0</accession>
<organism>
    <name type="scientific">Rhodopseudomonas palustris (strain ATCC BAA-98 / CGA009)</name>
    <dbReference type="NCBI Taxonomy" id="258594"/>
    <lineage>
        <taxon>Bacteria</taxon>
        <taxon>Pseudomonadati</taxon>
        <taxon>Pseudomonadota</taxon>
        <taxon>Alphaproteobacteria</taxon>
        <taxon>Hyphomicrobiales</taxon>
        <taxon>Nitrobacteraceae</taxon>
        <taxon>Rhodopseudomonas</taxon>
    </lineage>
</organism>
<evidence type="ECO:0000269" key="1">
    <source>
    </source>
</evidence>
<evidence type="ECO:0000303" key="2">
    <source>
    </source>
</evidence>
<evidence type="ECO:0000305" key="3"/>
<evidence type="ECO:0000312" key="4">
    <source>
        <dbReference type="EMBL" id="CAE29003.1"/>
    </source>
</evidence>